<feature type="chain" id="PRO_1000096824" description="Phosphopantetheine adenylyltransferase">
    <location>
        <begin position="1"/>
        <end position="157"/>
    </location>
</feature>
<feature type="binding site" evidence="1">
    <location>
        <begin position="8"/>
        <end position="9"/>
    </location>
    <ligand>
        <name>ATP</name>
        <dbReference type="ChEBI" id="CHEBI:30616"/>
    </ligand>
</feature>
<feature type="binding site" evidence="1">
    <location>
        <position position="8"/>
    </location>
    <ligand>
        <name>substrate</name>
    </ligand>
</feature>
<feature type="binding site" evidence="1">
    <location>
        <position position="16"/>
    </location>
    <ligand>
        <name>ATP</name>
        <dbReference type="ChEBI" id="CHEBI:30616"/>
    </ligand>
</feature>
<feature type="binding site" evidence="1">
    <location>
        <position position="40"/>
    </location>
    <ligand>
        <name>substrate</name>
    </ligand>
</feature>
<feature type="binding site" evidence="1">
    <location>
        <position position="72"/>
    </location>
    <ligand>
        <name>substrate</name>
    </ligand>
</feature>
<feature type="binding site" evidence="1">
    <location>
        <position position="86"/>
    </location>
    <ligand>
        <name>substrate</name>
    </ligand>
</feature>
<feature type="binding site" evidence="1">
    <location>
        <begin position="87"/>
        <end position="89"/>
    </location>
    <ligand>
        <name>ATP</name>
        <dbReference type="ChEBI" id="CHEBI:30616"/>
    </ligand>
</feature>
<feature type="binding site" evidence="1">
    <location>
        <position position="97"/>
    </location>
    <ligand>
        <name>ATP</name>
        <dbReference type="ChEBI" id="CHEBI:30616"/>
    </ligand>
</feature>
<feature type="binding site" evidence="1">
    <location>
        <begin position="122"/>
        <end position="128"/>
    </location>
    <ligand>
        <name>ATP</name>
        <dbReference type="ChEBI" id="CHEBI:30616"/>
    </ligand>
</feature>
<feature type="site" description="Transition state stabilizer" evidence="1">
    <location>
        <position position="16"/>
    </location>
</feature>
<accession>A9BAE9</accession>
<protein>
    <recommendedName>
        <fullName evidence="1">Phosphopantetheine adenylyltransferase</fullName>
        <ecNumber evidence="1">2.7.7.3</ecNumber>
    </recommendedName>
    <alternativeName>
        <fullName evidence="1">Dephospho-CoA pyrophosphorylase</fullName>
    </alternativeName>
    <alternativeName>
        <fullName evidence="1">Pantetheine-phosphate adenylyltransferase</fullName>
        <shortName evidence="1">PPAT</shortName>
    </alternativeName>
</protein>
<evidence type="ECO:0000255" key="1">
    <source>
        <dbReference type="HAMAP-Rule" id="MF_00151"/>
    </source>
</evidence>
<comment type="function">
    <text evidence="1">Reversibly transfers an adenylyl group from ATP to 4'-phosphopantetheine, yielding dephospho-CoA (dPCoA) and pyrophosphate.</text>
</comment>
<comment type="catalytic activity">
    <reaction evidence="1">
        <text>(R)-4'-phosphopantetheine + ATP + H(+) = 3'-dephospho-CoA + diphosphate</text>
        <dbReference type="Rhea" id="RHEA:19801"/>
        <dbReference type="ChEBI" id="CHEBI:15378"/>
        <dbReference type="ChEBI" id="CHEBI:30616"/>
        <dbReference type="ChEBI" id="CHEBI:33019"/>
        <dbReference type="ChEBI" id="CHEBI:57328"/>
        <dbReference type="ChEBI" id="CHEBI:61723"/>
        <dbReference type="EC" id="2.7.7.3"/>
    </reaction>
</comment>
<comment type="cofactor">
    <cofactor evidence="1">
        <name>Mg(2+)</name>
        <dbReference type="ChEBI" id="CHEBI:18420"/>
    </cofactor>
</comment>
<comment type="pathway">
    <text evidence="1">Cofactor biosynthesis; coenzyme A biosynthesis; CoA from (R)-pantothenate: step 4/5.</text>
</comment>
<comment type="subunit">
    <text evidence="1">Homohexamer.</text>
</comment>
<comment type="subcellular location">
    <subcellularLocation>
        <location evidence="1">Cytoplasm</location>
    </subcellularLocation>
</comment>
<comment type="similarity">
    <text evidence="1">Belongs to the bacterial CoaD family.</text>
</comment>
<reference key="1">
    <citation type="journal article" date="2007" name="PLoS Genet.">
        <title>Patterns and implications of gene gain and loss in the evolution of Prochlorococcus.</title>
        <authorList>
            <person name="Kettler G.C."/>
            <person name="Martiny A.C."/>
            <person name="Huang K."/>
            <person name="Zucker J."/>
            <person name="Coleman M.L."/>
            <person name="Rodrigue S."/>
            <person name="Chen F."/>
            <person name="Lapidus A."/>
            <person name="Ferriera S."/>
            <person name="Johnson J."/>
            <person name="Steglich C."/>
            <person name="Church G.M."/>
            <person name="Richardson P."/>
            <person name="Chisholm S.W."/>
        </authorList>
    </citation>
    <scope>NUCLEOTIDE SEQUENCE [LARGE SCALE GENOMIC DNA]</scope>
    <source>
        <strain>MIT 9211</strain>
    </source>
</reference>
<gene>
    <name evidence="1" type="primary">coaD</name>
    <name type="ordered locus">P9211_08801</name>
</gene>
<organism>
    <name type="scientific">Prochlorococcus marinus (strain MIT 9211)</name>
    <dbReference type="NCBI Taxonomy" id="93059"/>
    <lineage>
        <taxon>Bacteria</taxon>
        <taxon>Bacillati</taxon>
        <taxon>Cyanobacteriota</taxon>
        <taxon>Cyanophyceae</taxon>
        <taxon>Synechococcales</taxon>
        <taxon>Prochlorococcaceae</taxon>
        <taxon>Prochlorococcus</taxon>
    </lineage>
</organism>
<proteinExistence type="inferred from homology"/>
<dbReference type="EC" id="2.7.7.3" evidence="1"/>
<dbReference type="EMBL" id="CP000878">
    <property type="protein sequence ID" value="ABX08811.1"/>
    <property type="molecule type" value="Genomic_DNA"/>
</dbReference>
<dbReference type="RefSeq" id="WP_012195433.1">
    <property type="nucleotide sequence ID" value="NC_009976.1"/>
</dbReference>
<dbReference type="SMR" id="A9BAE9"/>
<dbReference type="STRING" id="93059.P9211_08801"/>
<dbReference type="KEGG" id="pmj:P9211_08801"/>
<dbReference type="eggNOG" id="COG0669">
    <property type="taxonomic scope" value="Bacteria"/>
</dbReference>
<dbReference type="HOGENOM" id="CLU_100149_0_1_3"/>
<dbReference type="OrthoDB" id="9806661at2"/>
<dbReference type="UniPathway" id="UPA00241">
    <property type="reaction ID" value="UER00355"/>
</dbReference>
<dbReference type="Proteomes" id="UP000000788">
    <property type="component" value="Chromosome"/>
</dbReference>
<dbReference type="GO" id="GO:0005737">
    <property type="term" value="C:cytoplasm"/>
    <property type="evidence" value="ECO:0007669"/>
    <property type="project" value="UniProtKB-SubCell"/>
</dbReference>
<dbReference type="GO" id="GO:0005524">
    <property type="term" value="F:ATP binding"/>
    <property type="evidence" value="ECO:0007669"/>
    <property type="project" value="UniProtKB-KW"/>
</dbReference>
<dbReference type="GO" id="GO:0004595">
    <property type="term" value="F:pantetheine-phosphate adenylyltransferase activity"/>
    <property type="evidence" value="ECO:0007669"/>
    <property type="project" value="UniProtKB-UniRule"/>
</dbReference>
<dbReference type="GO" id="GO:0015937">
    <property type="term" value="P:coenzyme A biosynthetic process"/>
    <property type="evidence" value="ECO:0007669"/>
    <property type="project" value="UniProtKB-UniRule"/>
</dbReference>
<dbReference type="CDD" id="cd02163">
    <property type="entry name" value="PPAT"/>
    <property type="match status" value="1"/>
</dbReference>
<dbReference type="Gene3D" id="3.40.50.620">
    <property type="entry name" value="HUPs"/>
    <property type="match status" value="1"/>
</dbReference>
<dbReference type="HAMAP" id="MF_00151">
    <property type="entry name" value="PPAT_bact"/>
    <property type="match status" value="1"/>
</dbReference>
<dbReference type="InterPro" id="IPR004821">
    <property type="entry name" value="Cyt_trans-like"/>
</dbReference>
<dbReference type="InterPro" id="IPR001980">
    <property type="entry name" value="PPAT"/>
</dbReference>
<dbReference type="InterPro" id="IPR014729">
    <property type="entry name" value="Rossmann-like_a/b/a_fold"/>
</dbReference>
<dbReference type="NCBIfam" id="TIGR01510">
    <property type="entry name" value="coaD_prev_kdtB"/>
    <property type="match status" value="1"/>
</dbReference>
<dbReference type="NCBIfam" id="TIGR00125">
    <property type="entry name" value="cyt_tran_rel"/>
    <property type="match status" value="1"/>
</dbReference>
<dbReference type="PANTHER" id="PTHR21342">
    <property type="entry name" value="PHOSPHOPANTETHEINE ADENYLYLTRANSFERASE"/>
    <property type="match status" value="1"/>
</dbReference>
<dbReference type="PANTHER" id="PTHR21342:SF1">
    <property type="entry name" value="PHOSPHOPANTETHEINE ADENYLYLTRANSFERASE"/>
    <property type="match status" value="1"/>
</dbReference>
<dbReference type="Pfam" id="PF01467">
    <property type="entry name" value="CTP_transf_like"/>
    <property type="match status" value="1"/>
</dbReference>
<dbReference type="PRINTS" id="PR01020">
    <property type="entry name" value="LPSBIOSNTHSS"/>
</dbReference>
<dbReference type="SUPFAM" id="SSF52374">
    <property type="entry name" value="Nucleotidylyl transferase"/>
    <property type="match status" value="1"/>
</dbReference>
<keyword id="KW-0067">ATP-binding</keyword>
<keyword id="KW-0173">Coenzyme A biosynthesis</keyword>
<keyword id="KW-0963">Cytoplasm</keyword>
<keyword id="KW-0460">Magnesium</keyword>
<keyword id="KW-0547">Nucleotide-binding</keyword>
<keyword id="KW-0548">Nucleotidyltransferase</keyword>
<keyword id="KW-1185">Reference proteome</keyword>
<keyword id="KW-0808">Transferase</keyword>
<sequence>MKALYPGSFDPLTLGHLDLIKRGCSLFGEVVIAVLENPTKSPTFSLESRIAQIKDATKEIRGVEVCSFKGLTVEFAKRKNADLILRGLRAMSDFEYELQIAHTNRTLNQNYETVFLATEAHFSFLSSSVVKEVAAFGGEINHMVPERVATELQQKFK</sequence>
<name>COAD_PROM4</name>